<feature type="chain" id="PRO_0000205198" description="Beta-arrestin-2">
    <location>
        <begin position="1"/>
        <end position="420"/>
    </location>
</feature>
<feature type="region of interest" description="Interaction with TRAF6" evidence="1">
    <location>
        <begin position="240"/>
        <end position="409"/>
    </location>
</feature>
<feature type="region of interest" description="Interaction with AP2B1" evidence="1">
    <location>
        <begin position="374"/>
        <end position="420"/>
    </location>
</feature>
<feature type="short sequence motif" description="[DE]-X(1,2)-F-X-X-[FL]-X-X-X-R motif" evidence="1">
    <location>
        <begin position="396"/>
        <end position="406"/>
    </location>
</feature>
<feature type="modified residue" description="Phosphotyrosine" evidence="4">
    <location>
        <position position="48"/>
    </location>
</feature>
<feature type="modified residue" description="Hydroxyproline; by PHD2" evidence="1">
    <location>
        <position position="176"/>
    </location>
</feature>
<feature type="modified residue" description="Hydroxyproline; by PHD2" evidence="1">
    <location>
        <position position="181"/>
    </location>
</feature>
<feature type="modified residue" description="Phosphoserine" evidence="2">
    <location>
        <position position="360"/>
    </location>
</feature>
<feature type="modified residue" description="Phosphothreonine" evidence="2">
    <location>
        <position position="393"/>
    </location>
</feature>
<feature type="splice variant" id="VSP_000323" description="In isoform Short." evidence="13">
    <location>
        <begin position="363"/>
        <end position="373"/>
    </location>
</feature>
<feature type="mutagenesis site" description="Abolishes phosphoinositide binding and ADRB2 internalization; when associated with Q-237 and Q-251." evidence="5">
    <original>K</original>
    <variation>Q</variation>
    <location>
        <position position="233"/>
    </location>
</feature>
<feature type="mutagenesis site" description="Abolishes phosphoinositide binding and ADRB2 internalization; when associated with Q-233 and Q-251." evidence="5">
    <original>R</original>
    <variation>Q</variation>
    <location>
        <position position="237"/>
    </location>
</feature>
<feature type="mutagenesis site" description="Abolishes phosphoinositide binding and ADRB2 internalization; when associated with Q-233 and Q-237." evidence="5">
    <original>K</original>
    <variation>Q</variation>
    <location>
        <position position="251"/>
    </location>
</feature>
<feature type="mutagenesis site" description="Lowers self-association; impairs interaction with ADRB2, MAPK1 and MAPK3; no effect on interaction with MAPK10." evidence="8">
    <original>KR</original>
    <variation>AA</variation>
    <location>
        <begin position="285"/>
        <end position="286"/>
    </location>
</feature>
<feature type="mutagenesis site" description="Impairs interaction with ADRB2, MAPK1 AND MAPK3; no effect on interaction with MAPK10." evidence="8">
    <original>K</original>
    <variation>A</variation>
    <location>
        <position position="295"/>
    </location>
</feature>
<feature type="mutagenesis site" description="Greatly reduces interaction with clathrin; when associated with A-387." evidence="12">
    <original>LI</original>
    <variation>AA</variation>
    <location>
        <begin position="384"/>
        <end position="385"/>
    </location>
</feature>
<feature type="mutagenesis site" description="Abolishes interaction with clathrin; when associated with K-377.">
    <original>E</original>
    <variation>K</variation>
    <location>
        <position position="386"/>
    </location>
</feature>
<feature type="mutagenesis site" description="Greatly reduces interaction with clathrin; when associated with 384-A-A-385.">
    <original>F</original>
    <variation>A</variation>
    <location>
        <position position="387"/>
    </location>
</feature>
<feature type="mutagenesis site" description="Abolishes interaction with clathrin; when associated with K-375." evidence="12">
    <original>E</original>
    <variation>K</variation>
    <location>
        <position position="388"/>
    </location>
</feature>
<feature type="sequence conflict" description="In Ref. 2; AAC28615." evidence="13" ref="2">
    <original>A</original>
    <variation>P</variation>
    <location>
        <position position="362"/>
    </location>
</feature>
<feature type="strand" evidence="15">
    <location>
        <begin position="10"/>
        <end position="13"/>
    </location>
</feature>
<feature type="strand" evidence="15">
    <location>
        <begin position="17"/>
        <end position="24"/>
    </location>
</feature>
<feature type="strand" evidence="15">
    <location>
        <begin position="26"/>
        <end position="30"/>
    </location>
</feature>
<feature type="strand" evidence="15">
    <location>
        <begin position="38"/>
        <end position="44"/>
    </location>
</feature>
<feature type="helix" evidence="15">
    <location>
        <begin position="46"/>
        <end position="49"/>
    </location>
</feature>
<feature type="strand" evidence="15">
    <location>
        <begin position="53"/>
        <end position="65"/>
    </location>
</feature>
<feature type="helix" evidence="15">
    <location>
        <begin position="67"/>
        <end position="71"/>
    </location>
</feature>
<feature type="strand" evidence="15">
    <location>
        <begin position="75"/>
        <end position="89"/>
    </location>
</feature>
<feature type="strand" evidence="17">
    <location>
        <begin position="93"/>
        <end position="95"/>
    </location>
</feature>
<feature type="helix" evidence="15">
    <location>
        <begin position="100"/>
        <end position="109"/>
    </location>
</feature>
<feature type="helix" evidence="18">
    <location>
        <begin position="110"/>
        <end position="112"/>
    </location>
</feature>
<feature type="strand" evidence="15">
    <location>
        <begin position="113"/>
        <end position="118"/>
    </location>
</feature>
<feature type="strand" evidence="15">
    <location>
        <begin position="122"/>
        <end position="124"/>
    </location>
</feature>
<feature type="strand" evidence="15">
    <location>
        <begin position="128"/>
        <end position="130"/>
    </location>
</feature>
<feature type="strand" evidence="16">
    <location>
        <begin position="134"/>
        <end position="136"/>
    </location>
</feature>
<feature type="strand" evidence="15">
    <location>
        <begin position="141"/>
        <end position="157"/>
    </location>
</feature>
<feature type="turn" evidence="15">
    <location>
        <begin position="161"/>
        <end position="163"/>
    </location>
</feature>
<feature type="strand" evidence="15">
    <location>
        <begin position="165"/>
        <end position="172"/>
    </location>
</feature>
<feature type="strand" evidence="15">
    <location>
        <begin position="184"/>
        <end position="190"/>
    </location>
</feature>
<feature type="strand" evidence="15">
    <location>
        <begin position="192"/>
        <end position="195"/>
    </location>
</feature>
<feature type="strand" evidence="15">
    <location>
        <begin position="197"/>
        <end position="205"/>
    </location>
</feature>
<feature type="strand" evidence="15">
    <location>
        <begin position="207"/>
        <end position="210"/>
    </location>
</feature>
<feature type="strand" evidence="15">
    <location>
        <begin position="215"/>
        <end position="226"/>
    </location>
</feature>
<feature type="strand" evidence="15">
    <location>
        <begin position="229"/>
        <end position="259"/>
    </location>
</feature>
<feature type="strand" evidence="15">
    <location>
        <begin position="267"/>
        <end position="275"/>
    </location>
</feature>
<feature type="helix" evidence="15">
    <location>
        <begin position="279"/>
        <end position="281"/>
    </location>
</feature>
<feature type="strand" evidence="15">
    <location>
        <begin position="289"/>
        <end position="291"/>
    </location>
</feature>
<feature type="strand" evidence="17">
    <location>
        <begin position="294"/>
        <end position="296"/>
    </location>
</feature>
<feature type="turn" evidence="14">
    <location>
        <begin position="309"/>
        <end position="311"/>
    </location>
</feature>
<feature type="strand" evidence="15">
    <location>
        <begin position="315"/>
        <end position="333"/>
    </location>
</feature>
<feature type="strand" evidence="15">
    <location>
        <begin position="336"/>
        <end position="345"/>
    </location>
</feature>
<feature type="strand" evidence="14">
    <location>
        <begin position="398"/>
        <end position="402"/>
    </location>
</feature>
<dbReference type="EMBL" id="L14641">
    <property type="status" value="NOT_ANNOTATED_CDS"/>
    <property type="molecule type" value="mRNA"/>
</dbReference>
<dbReference type="EMBL" id="AF051456">
    <property type="protein sequence ID" value="AAC28615.1"/>
    <property type="molecule type" value="Genomic_DNA"/>
</dbReference>
<dbReference type="EMBL" id="AF051456">
    <property type="protein sequence ID" value="AAC28616.1"/>
    <property type="molecule type" value="Genomic_DNA"/>
</dbReference>
<dbReference type="PIR" id="A47140">
    <property type="entry name" value="A47140"/>
</dbReference>
<dbReference type="PDB" id="3P2D">
    <property type="method" value="X-ray"/>
    <property type="resolution" value="3.00 A"/>
    <property type="chains" value="A/B=1-404"/>
</dbReference>
<dbReference type="PDB" id="5TV1">
    <property type="method" value="X-ray"/>
    <property type="resolution" value="2.40 A"/>
    <property type="chains" value="A=8-404"/>
</dbReference>
<dbReference type="PDB" id="8GO9">
    <property type="method" value="EM"/>
    <property type="resolution" value="3.35 A"/>
    <property type="chains" value="A/F=1-420"/>
</dbReference>
<dbReference type="PDB" id="8GOC">
    <property type="method" value="EM"/>
    <property type="resolution" value="4.18 A"/>
    <property type="chains" value="A/B/C=1-420"/>
</dbReference>
<dbReference type="PDB" id="8GOO">
    <property type="method" value="EM"/>
    <property type="resolution" value="4.40 A"/>
    <property type="chains" value="A/B/C=1-420"/>
</dbReference>
<dbReference type="PDB" id="8I0Z">
    <property type="method" value="EM"/>
    <property type="resolution" value="4.33 A"/>
    <property type="chains" value="A/B/C=1-420"/>
</dbReference>
<dbReference type="PDB" id="8I10">
    <property type="method" value="EM"/>
    <property type="resolution" value="3.96 A"/>
    <property type="chains" value="A/B/C=1-420"/>
</dbReference>
<dbReference type="PDB" id="8J8R">
    <property type="method" value="EM"/>
    <property type="resolution" value="2.90 A"/>
    <property type="chains" value="A/B/C=1-420"/>
</dbReference>
<dbReference type="PDB" id="8J8V">
    <property type="method" value="EM"/>
    <property type="resolution" value="3.22 A"/>
    <property type="chains" value="A/F=1-420"/>
</dbReference>
<dbReference type="PDB" id="8TIL">
    <property type="method" value="EM"/>
    <property type="resolution" value="3.80 A"/>
    <property type="chains" value="A=1-403"/>
</dbReference>
<dbReference type="PDB" id="8TIN">
    <property type="method" value="EM"/>
    <property type="resolution" value="4.00 A"/>
    <property type="chains" value="A=1-403"/>
</dbReference>
<dbReference type="PDB" id="8VJ9">
    <property type="method" value="EM"/>
    <property type="resolution" value="3.30 A"/>
    <property type="chains" value="A=1-392"/>
</dbReference>
<dbReference type="PDBsum" id="3P2D"/>
<dbReference type="PDBsum" id="5TV1"/>
<dbReference type="PDBsum" id="8GO9"/>
<dbReference type="PDBsum" id="8GOC"/>
<dbReference type="PDBsum" id="8GOO"/>
<dbReference type="PDBsum" id="8I0Z"/>
<dbReference type="PDBsum" id="8I10"/>
<dbReference type="PDBsum" id="8J8R"/>
<dbReference type="PDBsum" id="8J8V"/>
<dbReference type="PDBsum" id="8TIL"/>
<dbReference type="PDBsum" id="8TIN"/>
<dbReference type="PDBsum" id="8VJ9"/>
<dbReference type="EMDB" id="EMD-34174"/>
<dbReference type="EMDB" id="EMD-34175"/>
<dbReference type="EMDB" id="EMD-34178"/>
<dbReference type="EMDB" id="EMD-35114"/>
<dbReference type="EMDB" id="EMD-35115"/>
<dbReference type="EMDB" id="EMD-36078"/>
<dbReference type="EMDB" id="EMD-36081"/>
<dbReference type="EMDB" id="EMD-41295"/>
<dbReference type="EMDB" id="EMD-41296"/>
<dbReference type="EMDB" id="EMD-43277"/>
<dbReference type="SMR" id="P32120"/>
<dbReference type="CORUM" id="P32120"/>
<dbReference type="ELM" id="P32120"/>
<dbReference type="FunCoup" id="P32120">
    <property type="interactions" value="1252"/>
</dbReference>
<dbReference type="STRING" id="9913.ENSBTAP00000046840"/>
<dbReference type="BindingDB" id="P32120"/>
<dbReference type="iPTMnet" id="P32120"/>
<dbReference type="PaxDb" id="9913-ENSBTAP00000046840"/>
<dbReference type="PeptideAtlas" id="P32120"/>
<dbReference type="eggNOG" id="KOG3865">
    <property type="taxonomic scope" value="Eukaryota"/>
</dbReference>
<dbReference type="InParanoid" id="P32120"/>
<dbReference type="EvolutionaryTrace" id="P32120"/>
<dbReference type="Proteomes" id="UP000009136">
    <property type="component" value="Unplaced"/>
</dbReference>
<dbReference type="GO" id="GO:0005905">
    <property type="term" value="C:clathrin-coated pit"/>
    <property type="evidence" value="ECO:0007669"/>
    <property type="project" value="UniProtKB-SubCell"/>
</dbReference>
<dbReference type="GO" id="GO:0005737">
    <property type="term" value="C:cytoplasm"/>
    <property type="evidence" value="ECO:0000250"/>
    <property type="project" value="UniProtKB"/>
</dbReference>
<dbReference type="GO" id="GO:0030139">
    <property type="term" value="C:endocytic vesicle"/>
    <property type="evidence" value="ECO:0000250"/>
    <property type="project" value="UniProtKB"/>
</dbReference>
<dbReference type="GO" id="GO:0005634">
    <property type="term" value="C:nucleus"/>
    <property type="evidence" value="ECO:0007669"/>
    <property type="project" value="UniProtKB-SubCell"/>
</dbReference>
<dbReference type="GO" id="GO:0005886">
    <property type="term" value="C:plasma membrane"/>
    <property type="evidence" value="ECO:0007669"/>
    <property type="project" value="UniProtKB-SubCell"/>
</dbReference>
<dbReference type="GO" id="GO:0031701">
    <property type="term" value="F:angiotensin receptor binding"/>
    <property type="evidence" value="ECO:0000318"/>
    <property type="project" value="GO_Central"/>
</dbReference>
<dbReference type="GO" id="GO:0000822">
    <property type="term" value="F:inositol hexakisphosphate binding"/>
    <property type="evidence" value="ECO:0000314"/>
    <property type="project" value="AgBase"/>
</dbReference>
<dbReference type="GO" id="GO:0035091">
    <property type="term" value="F:phosphatidylinositol binding"/>
    <property type="evidence" value="ECO:0000315"/>
    <property type="project" value="AgBase"/>
</dbReference>
<dbReference type="GO" id="GO:0005547">
    <property type="term" value="F:phosphatidylinositol-3,4,5-trisphosphate binding"/>
    <property type="evidence" value="ECO:0000314"/>
    <property type="project" value="AgBase"/>
</dbReference>
<dbReference type="GO" id="GO:0002029">
    <property type="term" value="P:desensitization of G protein-coupled receptor signaling pathway"/>
    <property type="evidence" value="ECO:0000304"/>
    <property type="project" value="AgBase"/>
</dbReference>
<dbReference type="GO" id="GO:0002031">
    <property type="term" value="P:G protein-coupled receptor internalization"/>
    <property type="evidence" value="ECO:0000318"/>
    <property type="project" value="GO_Central"/>
</dbReference>
<dbReference type="GO" id="GO:0070374">
    <property type="term" value="P:positive regulation of ERK1 and ERK2 cascade"/>
    <property type="evidence" value="ECO:0000318"/>
    <property type="project" value="GO_Central"/>
</dbReference>
<dbReference type="GO" id="GO:0002092">
    <property type="term" value="P:positive regulation of receptor internalization"/>
    <property type="evidence" value="ECO:0000250"/>
    <property type="project" value="UniProtKB"/>
</dbReference>
<dbReference type="GO" id="GO:0015031">
    <property type="term" value="P:protein transport"/>
    <property type="evidence" value="ECO:0007669"/>
    <property type="project" value="UniProtKB-KW"/>
</dbReference>
<dbReference type="GO" id="GO:0031623">
    <property type="term" value="P:receptor internalization"/>
    <property type="evidence" value="ECO:0000315"/>
    <property type="project" value="AgBase"/>
</dbReference>
<dbReference type="GO" id="GO:0007165">
    <property type="term" value="P:signal transduction"/>
    <property type="evidence" value="ECO:0007669"/>
    <property type="project" value="InterPro"/>
</dbReference>
<dbReference type="FunFam" id="2.60.40.640:FF:000003">
    <property type="entry name" value="beta-arrestin-1 isoform X1"/>
    <property type="match status" value="1"/>
</dbReference>
<dbReference type="FunFam" id="2.60.40.840:FF:000001">
    <property type="entry name" value="beta-arrestin-1 isoform X1"/>
    <property type="match status" value="1"/>
</dbReference>
<dbReference type="Gene3D" id="2.60.40.640">
    <property type="match status" value="1"/>
</dbReference>
<dbReference type="Gene3D" id="2.60.40.840">
    <property type="match status" value="1"/>
</dbReference>
<dbReference type="InterPro" id="IPR000698">
    <property type="entry name" value="Arrestin"/>
</dbReference>
<dbReference type="InterPro" id="IPR014752">
    <property type="entry name" value="Arrestin-like_C"/>
</dbReference>
<dbReference type="InterPro" id="IPR011021">
    <property type="entry name" value="Arrestin-like_N"/>
</dbReference>
<dbReference type="InterPro" id="IPR011022">
    <property type="entry name" value="Arrestin_C-like"/>
</dbReference>
<dbReference type="InterPro" id="IPR017864">
    <property type="entry name" value="Arrestin_CS"/>
</dbReference>
<dbReference type="InterPro" id="IPR014753">
    <property type="entry name" value="Arrestin_N"/>
</dbReference>
<dbReference type="InterPro" id="IPR014756">
    <property type="entry name" value="Ig_E-set"/>
</dbReference>
<dbReference type="PANTHER" id="PTHR11792">
    <property type="entry name" value="ARRESTIN"/>
    <property type="match status" value="1"/>
</dbReference>
<dbReference type="PANTHER" id="PTHR11792:SF20">
    <property type="entry name" value="BETA-ARRESTIN-2"/>
    <property type="match status" value="1"/>
</dbReference>
<dbReference type="Pfam" id="PF02752">
    <property type="entry name" value="Arrestin_C"/>
    <property type="match status" value="1"/>
</dbReference>
<dbReference type="Pfam" id="PF00339">
    <property type="entry name" value="Arrestin_N"/>
    <property type="match status" value="1"/>
</dbReference>
<dbReference type="PRINTS" id="PR00309">
    <property type="entry name" value="ARRESTIN"/>
</dbReference>
<dbReference type="SMART" id="SM01017">
    <property type="entry name" value="Arrestin_C"/>
    <property type="match status" value="1"/>
</dbReference>
<dbReference type="SUPFAM" id="SSF81296">
    <property type="entry name" value="E set domains"/>
    <property type="match status" value="2"/>
</dbReference>
<dbReference type="PROSITE" id="PS00295">
    <property type="entry name" value="ARRESTINS"/>
    <property type="match status" value="1"/>
</dbReference>
<proteinExistence type="evidence at protein level"/>
<name>ARRB2_BOVIN</name>
<sequence length="420" mass="47224">MGEKPGTRVFKKSSPNCKLTVYLGKRDFVDHLDKVDPVDGVVLVDPDYLKDRKVFVTLTCAFRYGREDLDVLGLSFRKDLFIANYQAFPPTPNPPRPPTRLQERLLRKLGQHAHPFFFTIPQNLPCSVTLQPGPEDTGKACGVDFEIRAFCAKSLEEKSHKRNSVRLVIRKVQFAPEKPGPQPSAETTRHFLMSDRSLHLEASLDKELYYHGEPLNVNVHVTNNSTKTVKKIKVSVRQYADICLFSTAQYKCPVAQVEQDDQVSPSSTFCKVYTITPLLSNNREKRGLALDGKLKHEDTNLASSTIVKEGANKEVLGILVSYRVKVKLVVSRGGDVSVELPFVLMHPKPHDHIALPRPQSAATHPPTLLPSAVPETDAPVDTNLIEFETNYATDDDIVFEDFARLRLKGLKDEDYDDQFC</sequence>
<comment type="function">
    <text evidence="1 3 6 7 9 10 11">Functions in regulating agonist-mediated G-protein coupled receptor (GPCR) signaling by mediating both receptor desensitization and resensitization processes. During homologous desensitization, beta-arrestins bind to the GPRK-phosphorylated receptor and sterically preclude its coupling to the cognate G-protein; the binding appears to require additional receptor determinants exposed only in the active receptor conformation. The beta-arrestins target many receptors for internalization by acting as endocytic adapters (CLASPs, clathrin-associated sorting proteins) and recruiting the GPRCs to the adapter protein 2 complex 2 (AP-2) in clathrin-coated pits (CCPs). However, the extent of beta-arrestin involvement appears to vary significantly depending on the receptor, agonist and cell type. Internalized arrestin-receptor complexes traffic to intracellular endosomes, where they remain uncoupled from G-proteins. Two different modes of arrestin-mediated internalization occur. Class A receptors, like ADRB2, OPRM1, ENDRA, D1AR and ADRA1B dissociate from beta-arrestin at or near the plasma membrane and undergo rapid recycling. Class B receptors, like AVPR2, AGTR1, NTSR1, TRHR and TACR1 internalize as a complex with arrestin and traffic with it to endosomal vesicles, presumably as desensitized receptors, for extended periods of time. Receptor resensitization then requires that receptor-bound arrestin is removed so that the receptor can be dephosphorylated and returned to the plasma membrane. Mediates endocytosis of CCR7 following ligation of CCL19 but not CCL21. Involved in internalization of P2RY1, P2RY4, P2RY6 and P2RY11 and ATP-stimulated internalization of P2RY2. Involved in phosphorylation-dependent internalization of OPRD1 and subsequent recycling or degradation. Involved in ubiquitination of IGF1R. Beta-arrestins function as multivalent adapter proteins that can switch the GPCR from a G-protein signaling mode that transmits short-lived signals from the plasma membrane via small molecule second messengers and ion channels to a beta-arrestin signaling mode that transmits a distinct set of signals that are initiated as the receptor internalizes and transits the intracellular compartment. Acts as a signaling scaffold for MAPK pathways such as MAPK1/3 (ERK1/2) and MAPK10 (JNK3). ERK1/2 and JNK3 activated by the beta-arrestin scaffold are largely excluded from the nucleus and confined to cytoplasmic locations such as endocytic vesicles, also called beta-arrestin signalosomes. Acts as a signaling scaffold for the AKT1 pathway. GPCRs for which the beta-arrestin-mediated signaling relies on both ARRB1 and ARRB2 (codependent regulation) include ADRB2, F2RL1 and PTH1R. For some GPCRs the beta-arrestin-mediated signaling relies on either ARRB1 or ARRB2 and is inhibited by the other respective beta-arrestin form (reciprocal regulation). Increases ERK1/2 signaling in AGTR1- and AVPR2-mediated activation (reciprocal regulation). Involved in CCR7-mediated ERK1/2 signaling involving ligand CCL19. Is involved in type-1A angiotensin II receptor/AGTR1-mediated ERK activity. Is involved in type-1A angiotensin II receptor/AGTR1-mediated MAPK10 activity. Is involved in dopamine-stimulated AKT1 activity in the striatum by disrupting the association of AKT1 with its negative regulator PP2A. Involved in AGTR1-mediated chemotaxis. Appears to function as signaling scaffold involved in regulation of MIP-1-beta-stimulated CCR5-dependent chemotaxis. Involved in attenuation of NF-kappa-B-dependent transcription in response to GPCR or cytokine stimulation by interacting with and stabilizing CHUK. Suppresses UV-induced NF-kappa-B-dependent activation by interacting with CHUK. The function is promoted by stimulation of ADRB2 and dephosphorylation of ARRB2. Involved in p53/TP53-mediated apoptosis by regulating MDM2 and reducing the MDM2-mediated degradation of p53/TP53. May serve as nuclear messenger for GPCRs. Upon stimulation of OR1D2, may be involved in regulation of gene expression during the early processes of fertilization. Also involved in regulation of receptors other than GPCRs. Involved in endocytosis of TGFBR2 and TGFBR3 and down-regulates TGF-beta signaling such as NF-kappa-B activation. Involved in endocytosis of low-density lipoprotein receptor/LDLR. Involved in endocytosis of smoothened homolog/Smo, which also requires GRK2. Involved in endocytosis of SLC9A5. Involved in endocytosis of ENG and subsequent TGF-beta-mediated ERK activation and migration of epithelial cells. Involved in Toll-like receptor and IL-1 receptor signaling through the interaction with TRAF6 which prevents TRAF6 autoubiquitination and oligomerization required for activation of NF-kappa-B and JUN. Involved in insulin resistance by acting as insulin-induced signaling scaffold for SRC, AKT1 and INSR. Involved in regulation of inhibitory signaling of natural killer cells by recruiting PTPN6 and PTPN11 to KIR2DL1. Involved in IL8-mediated granule release in neutrophils. Involved in the internalization of the atypical chemokine receptor ACKR3 (By similarity). Acts as an adapter protein coupling FFAR4 receptor to specific downstream signaling pathways, as well as mediating receptor endocytosis. During the activation step of NLRP3 inflammasome, directly associates with NLRP3 leading to inhibition of pro-inflammatory cytokine release and inhibition of inflammation.</text>
</comment>
<comment type="subunit">
    <text evidence="1 3 13">Homooligomer; the self-association is mediated by InsP6-binding (Probable). Heterooligomer with ARRB1; the association is mediated by InsP6-binding. Interacts with ADRB2 and CHRM2. Interacts with PDE4A. Interacts with PDE4D. Interacts with MAPK10, MAPK1 and MAPK3. Interacts with DRD2. Interacts with FSHR. Interacts with CLTC. Interacts with HTR2C. Interacts with CRR5. Interacts with CXCR4. Interacts with SRC. Interacts with DUSP16; the interaction is interrupted by stimulation of AGTR1 and activation of MAPK10. Interacts with CHUK; the interaction is enhanced stimulation of ADRB2. Interacts with RELA. Interacts with MDM2; the interaction is enhanced by activation of GPCRs. Interacts with SLC9A5. Interacts with TRAF6. Interacts with IGF1R. Interacts with ENG. Interacts with KIR2DL1, KIR2DL3 and KIR2DL4. Interacts with LDLR. Interacts with AP2B1. Interacts with C5AR1. Interacts with RAF1. Interacts with MAP2K1. Interacts with MAPK1. Interacts with MAPK10; the interaction enhances MAPK10 activation by MAP3K5. Interacts with MAP2K4; the interaction is enhanced by presence of MAP3K5 and MAPK10. Interacts with MAP3K5. Interacts with AKT1. Interacts with IKBKB and MAP3K14. Interacts with SMO (activated). Interacts with GSK3A and GSK3B. Associates with protein phosphatase 2A (PP2A). Interacts with CXCR4; the interaction is dependent on C-terminal phosphorylation of CXCR4 and allows activation of MAPK1 and MAPK3. Interacts with GPR143. Interacts with HCK and CXCR1 (phosphorylated) (By similarity). Interacts with ACKR3 and ACKR4 (By similarity). Interacts with ARRDC1; the interaction is direct (By similarity). Interacts with GPR61, GPR62 and GPR135 (By similarity). Interacts (via NACHT and LRR domains) with NLRP3; this interaction is direct and inducible by omega-3 polyunsaturated fatty acids (PUFAs) (By similarity). Interacts with FFAR4 (via C-terminus); this interaction is stimulated by long-chain fatty acids (LCFAs) (By similarity). Interacts with GPR35 (By similarity). Interacts with GPR84 (By similarity). Interacts with TIGIT; this interaction inhibits the NF-kappa-B pathway (By similarity). Interacts with TGFBR3 (By similarity).</text>
</comment>
<comment type="subcellular location">
    <subcellularLocation>
        <location>Cytoplasm</location>
    </subcellularLocation>
    <subcellularLocation>
        <location evidence="1">Nucleus</location>
    </subcellularLocation>
    <subcellularLocation>
        <location>Cell membrane</location>
    </subcellularLocation>
    <subcellularLocation>
        <location evidence="1">Membrane</location>
        <location evidence="1">Clathrin-coated pit</location>
    </subcellularLocation>
    <subcellularLocation>
        <location evidence="1">Cytoplasmic vesicle</location>
    </subcellularLocation>
    <text>Translocates to the plasma membrane and colocalizes with antagonist-stimulated GPCRs.</text>
</comment>
<comment type="alternative products">
    <event type="alternative splicing"/>
    <isoform>
        <id>P32120-1</id>
        <name>Long</name>
        <sequence type="displayed"/>
    </isoform>
    <isoform>
        <id>P32120-2</id>
        <name>Short</name>
        <sequence type="described" ref="VSP_000323"/>
    </isoform>
</comment>
<comment type="tissue specificity">
    <text>Found in a variety of tissues. The short isoform is the most abundant form in all tissues.</text>
</comment>
<comment type="domain">
    <text evidence="1">The [DE]-X(1,2)-F-X-X-[FL]-X-X-X-R motif mediates interaction the AP-2 complex subunit AP2B1.</text>
</comment>
<comment type="PTM">
    <text evidence="1">Phosphorylated at Thr-382 in the cytoplasm; probably dephosphorylated at the plasma membrane. The phosphorylation does not regulate internalization and recycling of ADRB2, interaction with clathrin or AP2B1 (By similarity).</text>
</comment>
<comment type="PTM">
    <text evidence="3">The ubiquitination status appears to regulate the formation and trafficking of beta-arrestin-GPCR complexes and signaling. Ubiquitination appears to occur GPCR-specific. Ubiquitinated by MDM2; the ubiquitination is required for rapid internalization of ADRB2. Deubiquitinated by USP33; the deubiquitination leads to a dissociation of the beta-arrestin-GPCR complex. Stimulation of a class A GPCR, such as ADRB2, induces transient ubiquitination and subsequently promotes association with USP33. Stimulation of a class B GPCR promotes a sustained ubiquitination. Deubiquitinated by USP20; allowing USP20 to deubiquitinate TRAF6 leading to inhibition of NF-kappa-B signaling (By similarity).</text>
</comment>
<comment type="PTM">
    <text evidence="1">Hydroxylation by PHD2 modulates the rate of internalization by slowing down recruitment to the plasma membrane and inhibiting subsequent co-internalization with class A receptors.</text>
</comment>
<comment type="similarity">
    <text evidence="13">Belongs to the arrestin family.</text>
</comment>
<evidence type="ECO:0000250" key="1"/>
<evidence type="ECO:0000250" key="2">
    <source>
        <dbReference type="UniProtKB" id="P29067"/>
    </source>
</evidence>
<evidence type="ECO:0000250" key="3">
    <source>
        <dbReference type="UniProtKB" id="P32121"/>
    </source>
</evidence>
<evidence type="ECO:0000250" key="4">
    <source>
        <dbReference type="UniProtKB" id="Q91YI4"/>
    </source>
</evidence>
<evidence type="ECO:0000269" key="5">
    <source>
    </source>
</evidence>
<evidence type="ECO:0000269" key="6">
    <source>
    </source>
</evidence>
<evidence type="ECO:0000269" key="7">
    <source>
    </source>
</evidence>
<evidence type="ECO:0000269" key="8">
    <source>
    </source>
</evidence>
<evidence type="ECO:0000269" key="9">
    <source>
    </source>
</evidence>
<evidence type="ECO:0000269" key="10">
    <source>
    </source>
</evidence>
<evidence type="ECO:0000269" key="11">
    <source>
    </source>
</evidence>
<evidence type="ECO:0000269" key="12">
    <source>
    </source>
</evidence>
<evidence type="ECO:0000305" key="13"/>
<evidence type="ECO:0007829" key="14">
    <source>
        <dbReference type="PDB" id="3P2D"/>
    </source>
</evidence>
<evidence type="ECO:0007829" key="15">
    <source>
        <dbReference type="PDB" id="5TV1"/>
    </source>
</evidence>
<evidence type="ECO:0007829" key="16">
    <source>
        <dbReference type="PDB" id="8GO9"/>
    </source>
</evidence>
<evidence type="ECO:0007829" key="17">
    <source>
        <dbReference type="PDB" id="8J8R"/>
    </source>
</evidence>
<evidence type="ECO:0007829" key="18">
    <source>
        <dbReference type="PDB" id="8J8V"/>
    </source>
</evidence>
<organism>
    <name type="scientific">Bos taurus</name>
    <name type="common">Bovine</name>
    <dbReference type="NCBI Taxonomy" id="9913"/>
    <lineage>
        <taxon>Eukaryota</taxon>
        <taxon>Metazoa</taxon>
        <taxon>Chordata</taxon>
        <taxon>Craniata</taxon>
        <taxon>Vertebrata</taxon>
        <taxon>Euteleostomi</taxon>
        <taxon>Mammalia</taxon>
        <taxon>Eutheria</taxon>
        <taxon>Laurasiatheria</taxon>
        <taxon>Artiodactyla</taxon>
        <taxon>Ruminantia</taxon>
        <taxon>Pecora</taxon>
        <taxon>Bovidae</taxon>
        <taxon>Bovinae</taxon>
        <taxon>Bos</taxon>
    </lineage>
</organism>
<accession>P32120</accession>
<accession>O77565</accession>
<accession>O77566</accession>
<keyword id="KW-0002">3D-structure</keyword>
<keyword id="KW-0025">Alternative splicing</keyword>
<keyword id="KW-1003">Cell membrane</keyword>
<keyword id="KW-0168">Coated pit</keyword>
<keyword id="KW-0963">Cytoplasm</keyword>
<keyword id="KW-0968">Cytoplasmic vesicle</keyword>
<keyword id="KW-0379">Hydroxylation</keyword>
<keyword id="KW-0472">Membrane</keyword>
<keyword id="KW-0539">Nucleus</keyword>
<keyword id="KW-0597">Phosphoprotein</keyword>
<keyword id="KW-0653">Protein transport</keyword>
<keyword id="KW-1185">Reference proteome</keyword>
<keyword id="KW-0734">Signal transduction inhibitor</keyword>
<keyword id="KW-0813">Transport</keyword>
<keyword id="KW-0832">Ubl conjugation</keyword>
<protein>
    <recommendedName>
        <fullName>Beta-arrestin-2</fullName>
    </recommendedName>
    <alternativeName>
        <fullName>Arrestin beta-2</fullName>
    </alternativeName>
    <alternativeName>
        <fullName>Arrestin-3</fullName>
    </alternativeName>
</protein>
<gene>
    <name type="primary">ARRB2</name>
</gene>
<reference key="1">
    <citation type="journal article" date="1993" name="J. Biol. Chem.">
        <title>Polypeptide variants of beta-arrestin and arrestin3.</title>
        <authorList>
            <person name="Sterne-Marr R."/>
            <person name="Gurevich V.V."/>
            <person name="Goldsmith P."/>
            <person name="Bodine R.C."/>
            <person name="Sanders C."/>
            <person name="Donoso L.A."/>
            <person name="Benovic J.L."/>
        </authorList>
    </citation>
    <scope>NUCLEOTIDE SEQUENCE [MRNA]</scope>
    <source>
        <tissue>Brain</tissue>
    </source>
</reference>
<reference key="2">
    <citation type="journal article" date="1998" name="Eur. J. Neurosci.">
        <title>Differential expression of alternative splice variants of beta-arrestin-1 and -2 in rat central nervous system and peripheral tissues.</title>
        <authorList>
            <person name="Komori N."/>
            <person name="Cain S.D."/>
            <person name="Roch J.-M."/>
            <person name="Miller K.E."/>
            <person name="Matsumoto H."/>
        </authorList>
    </citation>
    <scope>NUCLEOTIDE SEQUENCE [GENOMIC DNA] OF 304-396</scope>
    <scope>ALTERNATIVE SPLICING</scope>
    <source>
        <tissue>Retina</tissue>
    </source>
</reference>
<reference key="3">
    <citation type="journal article" date="1995" name="J. Biol. Chem.">
        <title>Arrestin interactions with G protein-coupled receptors. Direct binding studies of wild type and mutant arrestins with rhodopsin, beta 2-adrenergic, and m2 muscarinic cholinergic receptors.</title>
        <authorList>
            <person name="Gurevich V.V."/>
            <person name="Dion S.B."/>
            <person name="Onorato J.J."/>
            <person name="Ptasienski J."/>
            <person name="Kim C.M."/>
            <person name="Sterne-Marr R."/>
            <person name="Hosey M.M."/>
            <person name="Benovic J.L."/>
        </authorList>
    </citation>
    <scope>INTERACTION WITH ADRB2 AND CHRM2</scope>
</reference>
<reference key="4">
    <citation type="journal article" date="1997" name="J. Biol. Chem.">
        <title>Arrestin/clathrin interaction. Localization of the clathrin binding domain of nonvisual arrestins to the carboxy terminus.</title>
        <authorList>
            <person name="Krupnick J.G."/>
            <person name="Goodman O.B. Jr."/>
            <person name="Keen J.H."/>
            <person name="Benovic J.L."/>
        </authorList>
    </citation>
    <scope>INTERACTION WITH CLATHRIN</scope>
    <scope>MUTAGENESIS OF 384-LEU-ILE-385; PRO-GLU-386 AND GLU-388</scope>
</reference>
<reference key="5">
    <citation type="journal article" date="1999" name="EMBO J.">
        <title>Arrestin function in G protein-coupled receptor endocytosis requires phosphoinositide binding.</title>
        <authorList>
            <person name="Gaidarov I."/>
            <person name="Krupnick J.G."/>
            <person name="Falck J.R."/>
            <person name="Benovic J.L."/>
            <person name="Keen J.H."/>
        </authorList>
    </citation>
    <scope>PHOSPHOINOSITIDE-BINDING</scope>
    <scope>MUTAGENESIS OF LYS-233; ARG-237 AND LYS-251</scope>
</reference>
<reference key="6">
    <citation type="journal article" date="1999" name="J. Biol. Chem.">
        <title>Internalization of the TXA2 receptor alpha and beta isoforms. Role of the differentially spliced cooh terminus in agonist-promoted receptor internalization.</title>
        <authorList>
            <person name="Parent J.-L."/>
            <person name="Labrecque P."/>
            <person name="Orsini M.J."/>
            <person name="Benovic J.L."/>
        </authorList>
    </citation>
    <scope>FUNCTION IN INTERNALIZATION OF TBXA2R</scope>
</reference>
<reference key="7">
    <citation type="journal article" date="1999" name="J. Biol. Chem.">
        <title>Trafficking of the HIV coreceptor CXCR4. Role of arrestins and identification of residues in the C-terminal tail that mediate receptor internalization.</title>
        <authorList>
            <person name="Orsini M.J."/>
            <person name="Parent J.-L."/>
            <person name="Mundell S.J."/>
            <person name="Benovic J.L."/>
        </authorList>
    </citation>
    <scope>FUNCTION IN INTERNALIZATION OF CXCR4</scope>
</reference>
<reference key="8">
    <citation type="journal article" date="2000" name="J. Biol. Chem.">
        <authorList>
            <person name="Orsini M.J."/>
            <person name="Parent J.-L."/>
            <person name="Mundell S.J."/>
            <person name="Marchese A."/>
            <person name="Benovic J.L."/>
        </authorList>
    </citation>
    <scope>ERRATUM OF PUBMED:10521508</scope>
</reference>
<reference key="9">
    <citation type="journal article" date="2003" name="Mol. Cell. Endocrinol.">
        <title>The association of arrestin-3 with the follitropin receptor depends on receptor activation and phosphorylation.</title>
        <authorList>
            <person name="Krishnamurthy H."/>
            <person name="Galet C."/>
            <person name="Ascoli M."/>
        </authorList>
    </citation>
    <scope>INTERACTION WITH FSHR</scope>
    <scope>SUBCELLULAR LOCATION</scope>
</reference>
<reference key="10">
    <citation type="journal article" date="2006" name="J. Biol. Chem.">
        <title>Nonvisual arrestin oligomerization and cellular localization are regulated by inositol hexakisphosphate binding.</title>
        <authorList>
            <person name="Milano S.K."/>
            <person name="Kim Y.-M."/>
            <person name="Stefano F.P."/>
            <person name="Benovic J.L."/>
            <person name="Brenner C."/>
        </authorList>
    </citation>
    <scope>SUBUNIT</scope>
</reference>
<reference key="11">
    <citation type="journal article" date="2008" name="J. Biol. Chem.">
        <title>Agonist-selective, receptor-specific interaction of human P2Y receptors with beta-arrestin-1 and -2.</title>
        <authorList>
            <person name="Hoffmann C."/>
            <person name="Ziegler N."/>
            <person name="Reiner S."/>
            <person name="Krasel C."/>
            <person name="Lohse M.J."/>
        </authorList>
    </citation>
    <scope>FUNCTION IN INTERNALIZATION OF P2Y PURINOCEPTORS</scope>
</reference>
<reference key="12">
    <citation type="journal article" date="2008" name="J. Immunol.">
        <title>Arrestin 3 mediates endocytosis of CCR7 following ligation of CCL19 but not CCL21.</title>
        <authorList>
            <person name="Byers M.A."/>
            <person name="Calloway P.A."/>
            <person name="Shannon L."/>
            <person name="Cunningham H.D."/>
            <person name="Smith S."/>
            <person name="Li F."/>
            <person name="Fassold B.C."/>
            <person name="Vines C.M."/>
        </authorList>
    </citation>
    <scope>FUNCTION IN INTERNALIZATION OF CCR7</scope>
    <scope>SUBCELLULAR LOCATION</scope>
</reference>
<reference key="13">
    <citation type="journal article" date="2008" name="Biochem. J.">
        <title>Mutations of beta-arrestin 2 that limit self-association also interfere with interactions with the beta2-adrenoceptor and the ERK1/2 MAPKs: implications for beta2-adrenoceptor signalling via the ERK1/2 MAPKs.</title>
        <authorList>
            <person name="Xu T.-R."/>
            <person name="Baillie G.S."/>
            <person name="Bhari N."/>
            <person name="Houslay T.M."/>
            <person name="Pitt A.M."/>
            <person name="Adams D.R."/>
            <person name="Kolch W."/>
            <person name="Houslay M.D."/>
            <person name="Milligan G."/>
        </authorList>
    </citation>
    <scope>SELF-ASSOCIATION</scope>
    <scope>INTERACTION WITH ADRB2; MAPK10; MAPK1 AND MAPK3</scope>
    <scope>MUTAGENESIS OF 285-LYS-ARG-286 AND LYS-295</scope>
</reference>
<reference key="14">
    <citation type="journal article" date="2009" name="J. Biol. Chem.">
        <title>G protein-coupled receptor kinase-mediated phosphorylation regulates post-endocytic trafficking of the D2 dopamine receptor.</title>
        <authorList>
            <person name="Namkung Y."/>
            <person name="Dipace C."/>
            <person name="Javitch J.A."/>
            <person name="Sibley D.R."/>
        </authorList>
    </citation>
    <scope>FUNCTION IN INTERNALIZATION OF DRD2</scope>
    <scope>INTERACTION WITH DRD2</scope>
</reference>